<sequence length="885" mass="97181">MNSREIRQSFLDFFAGKEHRIVRSAPVIPAEDPTLLFTNAGMNQFKDVFLGKGTREYTRAADTQKCIRASGKHNDLEDVGRDTYHHTFFEMLGNWSFGDYYKKEAIGWAWELMTEVWKLPKERLYATVYHDDEESFKLWQSETDIEHSHILKFGDKDNFWEMGETGPCGPCSEIHIDLTPDGSGGPLVNVGDHRVIELWNLVFIQYDRQADGTLVPLPQKHVDTGMGFERVAAVLQGKSSNYDSDVFAPLFDRITELTGTVYTASLDSPSDIAMRVIADHCRTLTFALSDGAMPGNEGRGYVLRRILRRAVRYAGTLGCHEPIIYKMVEVLVRTMGDVFPELEKQQATVEKIIRAEEESFLVTLGRGTEIFNEVVADMKTAGSTTISGADAFKLYDTFGFPLDLTRLMAAEVGLGIDEAGFEHCMMEQKTRARMDRKGKMQMQDDGGEWQWFAPEAPTTFVGYDMLETEATLVAARVSGDKLLMVLDQTPFYAESGGQVGDHGTLETAGYRLDVTDTRKDGEQIVHVVTSAHDKVRDCAVTPADVSFDGVVSVKAAVDRDRRVATERNHTATHLLHAALRKVLGEHVQQKGSLVTPERLRFDFSHFSKVSAEELEQVEHEVNAEIRKAASVTKHADVPYEEALALGALAFFGDKYADRVRVVEVPGISIELCGGTHVGNIGQIGMVKIVSESSVAAGIRRIEAVTGAAAEALLWQEYRDLQEIKNLLKLKADEEAGPKIKELLEEKKALDKQLQESRLAGLLDRLAASLAGGEEVNGCRIMTERLDGVSGDELRQAAVALRERVPCAVGLLCGVADGKVSLVAFASDEAVKSLKLDAGKLVKEAAASVKGGGGGKLELATAGGKEPAGIDKAIEVFVASVKSALQ</sequence>
<comment type="function">
    <text evidence="1">Catalyzes the attachment of alanine to tRNA(Ala) in a two-step reaction: alanine is first activated by ATP to form Ala-AMP and then transferred to the acceptor end of tRNA(Ala). Also edits incorrectly charged Ser-tRNA(Ala) and Gly-tRNA(Ala) via its editing domain.</text>
</comment>
<comment type="catalytic activity">
    <reaction evidence="1">
        <text>tRNA(Ala) + L-alanine + ATP = L-alanyl-tRNA(Ala) + AMP + diphosphate</text>
        <dbReference type="Rhea" id="RHEA:12540"/>
        <dbReference type="Rhea" id="RHEA-COMP:9657"/>
        <dbReference type="Rhea" id="RHEA-COMP:9923"/>
        <dbReference type="ChEBI" id="CHEBI:30616"/>
        <dbReference type="ChEBI" id="CHEBI:33019"/>
        <dbReference type="ChEBI" id="CHEBI:57972"/>
        <dbReference type="ChEBI" id="CHEBI:78442"/>
        <dbReference type="ChEBI" id="CHEBI:78497"/>
        <dbReference type="ChEBI" id="CHEBI:456215"/>
        <dbReference type="EC" id="6.1.1.7"/>
    </reaction>
</comment>
<comment type="cofactor">
    <cofactor evidence="1">
        <name>Zn(2+)</name>
        <dbReference type="ChEBI" id="CHEBI:29105"/>
    </cofactor>
    <text evidence="1">Binds 1 zinc ion per subunit.</text>
</comment>
<comment type="subcellular location">
    <subcellularLocation>
        <location evidence="1">Cytoplasm</location>
    </subcellularLocation>
</comment>
<comment type="domain">
    <text evidence="1">Consists of three domains; the N-terminal catalytic domain, the editing domain and the C-terminal C-Ala domain. The editing domain removes incorrectly charged amino acids, while the C-Ala domain, along with tRNA(Ala), serves as a bridge to cooperatively bring together the editing and aminoacylation centers thus stimulating deacylation of misacylated tRNAs.</text>
</comment>
<comment type="similarity">
    <text evidence="1">Belongs to the class-II aminoacyl-tRNA synthetase family.</text>
</comment>
<accession>Q8KG04</accession>
<gene>
    <name evidence="1" type="primary">alaS</name>
    <name type="ordered locus">CT0166</name>
</gene>
<name>SYA_CHLTE</name>
<proteinExistence type="inferred from homology"/>
<dbReference type="EC" id="6.1.1.7" evidence="1"/>
<dbReference type="EMBL" id="AE006470">
    <property type="protein sequence ID" value="AAM71414.1"/>
    <property type="molecule type" value="Genomic_DNA"/>
</dbReference>
<dbReference type="RefSeq" id="NP_661072.1">
    <property type="nucleotide sequence ID" value="NC_002932.3"/>
</dbReference>
<dbReference type="RefSeq" id="WP_010931860.1">
    <property type="nucleotide sequence ID" value="NC_002932.3"/>
</dbReference>
<dbReference type="SMR" id="Q8KG04"/>
<dbReference type="STRING" id="194439.CT0166"/>
<dbReference type="EnsemblBacteria" id="AAM71414">
    <property type="protein sequence ID" value="AAM71414"/>
    <property type="gene ID" value="CT0166"/>
</dbReference>
<dbReference type="KEGG" id="cte:CT0166"/>
<dbReference type="PATRIC" id="fig|194439.7.peg.162"/>
<dbReference type="eggNOG" id="COG0013">
    <property type="taxonomic scope" value="Bacteria"/>
</dbReference>
<dbReference type="HOGENOM" id="CLU_004485_1_1_10"/>
<dbReference type="OrthoDB" id="9803884at2"/>
<dbReference type="Proteomes" id="UP000001007">
    <property type="component" value="Chromosome"/>
</dbReference>
<dbReference type="GO" id="GO:0005737">
    <property type="term" value="C:cytoplasm"/>
    <property type="evidence" value="ECO:0007669"/>
    <property type="project" value="UniProtKB-SubCell"/>
</dbReference>
<dbReference type="GO" id="GO:0004813">
    <property type="term" value="F:alanine-tRNA ligase activity"/>
    <property type="evidence" value="ECO:0007669"/>
    <property type="project" value="UniProtKB-UniRule"/>
</dbReference>
<dbReference type="GO" id="GO:0002161">
    <property type="term" value="F:aminoacyl-tRNA deacylase activity"/>
    <property type="evidence" value="ECO:0007669"/>
    <property type="project" value="TreeGrafter"/>
</dbReference>
<dbReference type="GO" id="GO:0005524">
    <property type="term" value="F:ATP binding"/>
    <property type="evidence" value="ECO:0007669"/>
    <property type="project" value="UniProtKB-UniRule"/>
</dbReference>
<dbReference type="GO" id="GO:0000049">
    <property type="term" value="F:tRNA binding"/>
    <property type="evidence" value="ECO:0007669"/>
    <property type="project" value="UniProtKB-KW"/>
</dbReference>
<dbReference type="GO" id="GO:0008270">
    <property type="term" value="F:zinc ion binding"/>
    <property type="evidence" value="ECO:0007669"/>
    <property type="project" value="UniProtKB-UniRule"/>
</dbReference>
<dbReference type="GO" id="GO:0006419">
    <property type="term" value="P:alanyl-tRNA aminoacylation"/>
    <property type="evidence" value="ECO:0007669"/>
    <property type="project" value="UniProtKB-UniRule"/>
</dbReference>
<dbReference type="CDD" id="cd00673">
    <property type="entry name" value="AlaRS_core"/>
    <property type="match status" value="1"/>
</dbReference>
<dbReference type="FunFam" id="3.10.310.40:FF:000001">
    <property type="entry name" value="Alanine--tRNA ligase"/>
    <property type="match status" value="1"/>
</dbReference>
<dbReference type="FunFam" id="3.30.930.10:FF:000004">
    <property type="entry name" value="Alanine--tRNA ligase"/>
    <property type="match status" value="1"/>
</dbReference>
<dbReference type="FunFam" id="3.30.980.10:FF:000004">
    <property type="entry name" value="Alanine--tRNA ligase, cytoplasmic"/>
    <property type="match status" value="1"/>
</dbReference>
<dbReference type="Gene3D" id="2.40.30.130">
    <property type="match status" value="1"/>
</dbReference>
<dbReference type="Gene3D" id="3.10.310.40">
    <property type="match status" value="1"/>
</dbReference>
<dbReference type="Gene3D" id="3.30.54.20">
    <property type="match status" value="1"/>
</dbReference>
<dbReference type="Gene3D" id="3.30.930.10">
    <property type="entry name" value="Bira Bifunctional Protein, Domain 2"/>
    <property type="match status" value="1"/>
</dbReference>
<dbReference type="Gene3D" id="3.30.980.10">
    <property type="entry name" value="Threonyl-trna Synthetase, Chain A, domain 2"/>
    <property type="match status" value="1"/>
</dbReference>
<dbReference type="HAMAP" id="MF_00036_B">
    <property type="entry name" value="Ala_tRNA_synth_B"/>
    <property type="match status" value="1"/>
</dbReference>
<dbReference type="InterPro" id="IPR045864">
    <property type="entry name" value="aa-tRNA-synth_II/BPL/LPL"/>
</dbReference>
<dbReference type="InterPro" id="IPR002318">
    <property type="entry name" value="Ala-tRNA-lgiase_IIc"/>
</dbReference>
<dbReference type="InterPro" id="IPR018162">
    <property type="entry name" value="Ala-tRNA-ligase_IIc_anticod-bd"/>
</dbReference>
<dbReference type="InterPro" id="IPR018165">
    <property type="entry name" value="Ala-tRNA-synth_IIc_core"/>
</dbReference>
<dbReference type="InterPro" id="IPR018164">
    <property type="entry name" value="Ala-tRNA-synth_IIc_N"/>
</dbReference>
<dbReference type="InterPro" id="IPR050058">
    <property type="entry name" value="Ala-tRNA_ligase"/>
</dbReference>
<dbReference type="InterPro" id="IPR023033">
    <property type="entry name" value="Ala_tRNA_ligase_euk/bac"/>
</dbReference>
<dbReference type="InterPro" id="IPR003156">
    <property type="entry name" value="DHHA1_dom"/>
</dbReference>
<dbReference type="InterPro" id="IPR018163">
    <property type="entry name" value="Thr/Ala-tRNA-synth_IIc_edit"/>
</dbReference>
<dbReference type="InterPro" id="IPR009000">
    <property type="entry name" value="Transl_B-barrel_sf"/>
</dbReference>
<dbReference type="InterPro" id="IPR012947">
    <property type="entry name" value="tRNA_SAD"/>
</dbReference>
<dbReference type="NCBIfam" id="TIGR00344">
    <property type="entry name" value="alaS"/>
    <property type="match status" value="1"/>
</dbReference>
<dbReference type="PANTHER" id="PTHR11777:SF9">
    <property type="entry name" value="ALANINE--TRNA LIGASE, CYTOPLASMIC"/>
    <property type="match status" value="1"/>
</dbReference>
<dbReference type="PANTHER" id="PTHR11777">
    <property type="entry name" value="ALANYL-TRNA SYNTHETASE"/>
    <property type="match status" value="1"/>
</dbReference>
<dbReference type="Pfam" id="PF02272">
    <property type="entry name" value="DHHA1"/>
    <property type="match status" value="1"/>
</dbReference>
<dbReference type="Pfam" id="PF01411">
    <property type="entry name" value="tRNA-synt_2c"/>
    <property type="match status" value="1"/>
</dbReference>
<dbReference type="Pfam" id="PF07973">
    <property type="entry name" value="tRNA_SAD"/>
    <property type="match status" value="1"/>
</dbReference>
<dbReference type="PRINTS" id="PR00980">
    <property type="entry name" value="TRNASYNTHALA"/>
</dbReference>
<dbReference type="SMART" id="SM00863">
    <property type="entry name" value="tRNA_SAD"/>
    <property type="match status" value="1"/>
</dbReference>
<dbReference type="SUPFAM" id="SSF55681">
    <property type="entry name" value="Class II aaRS and biotin synthetases"/>
    <property type="match status" value="1"/>
</dbReference>
<dbReference type="SUPFAM" id="SSF101353">
    <property type="entry name" value="Putative anticodon-binding domain of alanyl-tRNA synthetase (AlaRS)"/>
    <property type="match status" value="1"/>
</dbReference>
<dbReference type="SUPFAM" id="SSF55186">
    <property type="entry name" value="ThrRS/AlaRS common domain"/>
    <property type="match status" value="1"/>
</dbReference>
<dbReference type="SUPFAM" id="SSF50447">
    <property type="entry name" value="Translation proteins"/>
    <property type="match status" value="1"/>
</dbReference>
<dbReference type="PROSITE" id="PS50860">
    <property type="entry name" value="AA_TRNA_LIGASE_II_ALA"/>
    <property type="match status" value="1"/>
</dbReference>
<organism>
    <name type="scientific">Chlorobaculum tepidum (strain ATCC 49652 / DSM 12025 / NBRC 103806 / TLS)</name>
    <name type="common">Chlorobium tepidum</name>
    <dbReference type="NCBI Taxonomy" id="194439"/>
    <lineage>
        <taxon>Bacteria</taxon>
        <taxon>Pseudomonadati</taxon>
        <taxon>Chlorobiota</taxon>
        <taxon>Chlorobiia</taxon>
        <taxon>Chlorobiales</taxon>
        <taxon>Chlorobiaceae</taxon>
        <taxon>Chlorobaculum</taxon>
    </lineage>
</organism>
<reference key="1">
    <citation type="journal article" date="2002" name="Proc. Natl. Acad. Sci. U.S.A.">
        <title>The complete genome sequence of Chlorobium tepidum TLS, a photosynthetic, anaerobic, green-sulfur bacterium.</title>
        <authorList>
            <person name="Eisen J.A."/>
            <person name="Nelson K.E."/>
            <person name="Paulsen I.T."/>
            <person name="Heidelberg J.F."/>
            <person name="Wu M."/>
            <person name="Dodson R.J."/>
            <person name="DeBoy R.T."/>
            <person name="Gwinn M.L."/>
            <person name="Nelson W.C."/>
            <person name="Haft D.H."/>
            <person name="Hickey E.K."/>
            <person name="Peterson J.D."/>
            <person name="Durkin A.S."/>
            <person name="Kolonay J.F."/>
            <person name="Yang F."/>
            <person name="Holt I.E."/>
            <person name="Umayam L.A."/>
            <person name="Mason T.M."/>
            <person name="Brenner M."/>
            <person name="Shea T.P."/>
            <person name="Parksey D.S."/>
            <person name="Nierman W.C."/>
            <person name="Feldblyum T.V."/>
            <person name="Hansen C.L."/>
            <person name="Craven M.B."/>
            <person name="Radune D."/>
            <person name="Vamathevan J.J."/>
            <person name="Khouri H.M."/>
            <person name="White O."/>
            <person name="Gruber T.M."/>
            <person name="Ketchum K.A."/>
            <person name="Venter J.C."/>
            <person name="Tettelin H."/>
            <person name="Bryant D.A."/>
            <person name="Fraser C.M."/>
        </authorList>
    </citation>
    <scope>NUCLEOTIDE SEQUENCE [LARGE SCALE GENOMIC DNA]</scope>
    <source>
        <strain>ATCC 49652 / DSM 12025 / NBRC 103806 / TLS</strain>
    </source>
</reference>
<protein>
    <recommendedName>
        <fullName evidence="1">Alanine--tRNA ligase</fullName>
        <ecNumber evidence="1">6.1.1.7</ecNumber>
    </recommendedName>
    <alternativeName>
        <fullName evidence="1">Alanyl-tRNA synthetase</fullName>
        <shortName evidence="1">AlaRS</shortName>
    </alternativeName>
</protein>
<keyword id="KW-0030">Aminoacyl-tRNA synthetase</keyword>
<keyword id="KW-0067">ATP-binding</keyword>
<keyword id="KW-0963">Cytoplasm</keyword>
<keyword id="KW-0436">Ligase</keyword>
<keyword id="KW-0479">Metal-binding</keyword>
<keyword id="KW-0547">Nucleotide-binding</keyword>
<keyword id="KW-0648">Protein biosynthesis</keyword>
<keyword id="KW-1185">Reference proteome</keyword>
<keyword id="KW-0694">RNA-binding</keyword>
<keyword id="KW-0820">tRNA-binding</keyword>
<keyword id="KW-0862">Zinc</keyword>
<feature type="chain" id="PRO_0000075091" description="Alanine--tRNA ligase">
    <location>
        <begin position="1"/>
        <end position="885"/>
    </location>
</feature>
<feature type="binding site" evidence="1">
    <location>
        <position position="569"/>
    </location>
    <ligand>
        <name>Zn(2+)</name>
        <dbReference type="ChEBI" id="CHEBI:29105"/>
    </ligand>
</feature>
<feature type="binding site" evidence="1">
    <location>
        <position position="573"/>
    </location>
    <ligand>
        <name>Zn(2+)</name>
        <dbReference type="ChEBI" id="CHEBI:29105"/>
    </ligand>
</feature>
<feature type="binding site" evidence="1">
    <location>
        <position position="672"/>
    </location>
    <ligand>
        <name>Zn(2+)</name>
        <dbReference type="ChEBI" id="CHEBI:29105"/>
    </ligand>
</feature>
<feature type="binding site" evidence="1">
    <location>
        <position position="676"/>
    </location>
    <ligand>
        <name>Zn(2+)</name>
        <dbReference type="ChEBI" id="CHEBI:29105"/>
    </ligand>
</feature>
<evidence type="ECO:0000255" key="1">
    <source>
        <dbReference type="HAMAP-Rule" id="MF_00036"/>
    </source>
</evidence>